<protein>
    <recommendedName>
        <fullName evidence="1">Small ribosomal subunit protein uS7</fullName>
    </recommendedName>
    <alternativeName>
        <fullName evidence="2">30S ribosomal protein S7</fullName>
    </alternativeName>
</protein>
<evidence type="ECO:0000255" key="1">
    <source>
        <dbReference type="HAMAP-Rule" id="MF_00480"/>
    </source>
</evidence>
<evidence type="ECO:0000305" key="2"/>
<sequence>MRKNRALKRTVLPDPVFNNTLVTRIINVIMKDGKKGLAQRILYGAFEIIEKRTNQQPLTVFEKAVDNVMPRLELKVRRIAGSNYQVPTEVPPDRRIALALRWIVIFANKRNEKTMLERVANEIIDAFNNTGASVKKKDDTHKMAEANKAFAHMRW</sequence>
<comment type="function">
    <text evidence="1">One of the primary rRNA binding proteins, it binds directly to 16S rRNA where it nucleates assembly of the head domain of the 30S subunit. Is located at the subunit interface close to the decoding center, probably blocks exit of the E-site tRNA.</text>
</comment>
<comment type="subunit">
    <text evidence="1">Part of the 30S ribosomal subunit. Contacts proteins S9 and S11.</text>
</comment>
<comment type="similarity">
    <text evidence="1">Belongs to the universal ribosomal protein uS7 family.</text>
</comment>
<comment type="sequence caution" evidence="2">
    <conflict type="erroneous initiation">
        <sequence resource="EMBL-CDS" id="AAD12505"/>
    </conflict>
</comment>
<feature type="chain" id="PRO_0000124295" description="Small ribosomal subunit protein uS7">
    <location>
        <begin position="1"/>
        <end position="155"/>
    </location>
</feature>
<gene>
    <name evidence="1" type="primary">rpsG</name>
    <name evidence="1" type="synonym">rps7</name>
    <name type="ordered locus">MG088</name>
</gene>
<keyword id="KW-1185">Reference proteome</keyword>
<keyword id="KW-0687">Ribonucleoprotein</keyword>
<keyword id="KW-0689">Ribosomal protein</keyword>
<keyword id="KW-0694">RNA-binding</keyword>
<keyword id="KW-0699">rRNA-binding</keyword>
<keyword id="KW-0820">tRNA-binding</keyword>
<organism>
    <name type="scientific">Mycoplasma genitalium (strain ATCC 33530 / DSM 19775 / NCTC 10195 / G37)</name>
    <name type="common">Mycoplasmoides genitalium</name>
    <dbReference type="NCBI Taxonomy" id="243273"/>
    <lineage>
        <taxon>Bacteria</taxon>
        <taxon>Bacillati</taxon>
        <taxon>Mycoplasmatota</taxon>
        <taxon>Mycoplasmoidales</taxon>
        <taxon>Mycoplasmoidaceae</taxon>
        <taxon>Mycoplasmoides</taxon>
    </lineage>
</organism>
<reference key="1">
    <citation type="journal article" date="1995" name="Science">
        <title>The minimal gene complement of Mycoplasma genitalium.</title>
        <authorList>
            <person name="Fraser C.M."/>
            <person name="Gocayne J.D."/>
            <person name="White O."/>
            <person name="Adams M.D."/>
            <person name="Clayton R.A."/>
            <person name="Fleischmann R.D."/>
            <person name="Bult C.J."/>
            <person name="Kerlavage A.R."/>
            <person name="Sutton G.G."/>
            <person name="Kelley J.M."/>
            <person name="Fritchman J.L."/>
            <person name="Weidman J.F."/>
            <person name="Small K.V."/>
            <person name="Sandusky M."/>
            <person name="Fuhrmann J.L."/>
            <person name="Nguyen D.T."/>
            <person name="Utterback T.R."/>
            <person name="Saudek D.M."/>
            <person name="Phillips C.A."/>
            <person name="Merrick J.M."/>
            <person name="Tomb J.-F."/>
            <person name="Dougherty B.A."/>
            <person name="Bott K.F."/>
            <person name="Hu P.-C."/>
            <person name="Lucier T.S."/>
            <person name="Peterson S.N."/>
            <person name="Smith H.O."/>
            <person name="Hutchison C.A. III"/>
            <person name="Venter J.C."/>
        </authorList>
    </citation>
    <scope>NUCLEOTIDE SEQUENCE [LARGE SCALE GENOMIC DNA]</scope>
    <source>
        <strain>ATCC 33530 / DSM 19775 / NCTC 10195 / G37</strain>
    </source>
</reference>
<reference key="2">
    <citation type="journal article" date="1993" name="J. Bacteriol.">
        <title>A survey of the Mycoplasma genitalium genome by using random sequencing.</title>
        <authorList>
            <person name="Peterson S.N."/>
            <person name="Hu P.-C."/>
            <person name="Bott K.F."/>
            <person name="Hutchison C.A. III"/>
        </authorList>
    </citation>
    <scope>NUCLEOTIDE SEQUENCE [GENOMIC DNA] OF 1-102</scope>
    <source>
        <strain>ATCC 33530 / DSM 19775 / NCTC 10195 / G37</strain>
    </source>
</reference>
<dbReference type="EMBL" id="L43967">
    <property type="protein sequence ID" value="AAC71306.1"/>
    <property type="molecule type" value="Genomic_DNA"/>
</dbReference>
<dbReference type="EMBL" id="U02212">
    <property type="protein sequence ID" value="AAD12505.1"/>
    <property type="status" value="ALT_INIT"/>
    <property type="molecule type" value="Genomic_DNA"/>
</dbReference>
<dbReference type="PIR" id="G64209">
    <property type="entry name" value="G64209"/>
</dbReference>
<dbReference type="RefSeq" id="WP_009885645.1">
    <property type="nucleotide sequence ID" value="NZ_AAGX01000002.1"/>
</dbReference>
<dbReference type="SMR" id="P47334"/>
<dbReference type="FunCoup" id="P47334">
    <property type="interactions" value="217"/>
</dbReference>
<dbReference type="STRING" id="243273.MG_088"/>
<dbReference type="KEGG" id="mge:MG_088"/>
<dbReference type="eggNOG" id="COG0049">
    <property type="taxonomic scope" value="Bacteria"/>
</dbReference>
<dbReference type="HOGENOM" id="CLU_072226_1_1_14"/>
<dbReference type="InParanoid" id="P47334"/>
<dbReference type="OrthoDB" id="9807653at2"/>
<dbReference type="BioCyc" id="MGEN243273:G1GJ2-100-MONOMER"/>
<dbReference type="Proteomes" id="UP000000807">
    <property type="component" value="Chromosome"/>
</dbReference>
<dbReference type="GO" id="GO:0022627">
    <property type="term" value="C:cytosolic small ribosomal subunit"/>
    <property type="evidence" value="ECO:0000318"/>
    <property type="project" value="GO_Central"/>
</dbReference>
<dbReference type="GO" id="GO:0005840">
    <property type="term" value="C:ribosome"/>
    <property type="evidence" value="ECO:0000318"/>
    <property type="project" value="GO_Central"/>
</dbReference>
<dbReference type="GO" id="GO:0003729">
    <property type="term" value="F:mRNA binding"/>
    <property type="evidence" value="ECO:0000318"/>
    <property type="project" value="GO_Central"/>
</dbReference>
<dbReference type="GO" id="GO:0019843">
    <property type="term" value="F:rRNA binding"/>
    <property type="evidence" value="ECO:0000318"/>
    <property type="project" value="GO_Central"/>
</dbReference>
<dbReference type="GO" id="GO:0003735">
    <property type="term" value="F:structural constituent of ribosome"/>
    <property type="evidence" value="ECO:0000318"/>
    <property type="project" value="GO_Central"/>
</dbReference>
<dbReference type="GO" id="GO:0000049">
    <property type="term" value="F:tRNA binding"/>
    <property type="evidence" value="ECO:0007669"/>
    <property type="project" value="UniProtKB-UniRule"/>
</dbReference>
<dbReference type="GO" id="GO:0000028">
    <property type="term" value="P:ribosomal small subunit assembly"/>
    <property type="evidence" value="ECO:0000318"/>
    <property type="project" value="GO_Central"/>
</dbReference>
<dbReference type="GO" id="GO:0006412">
    <property type="term" value="P:translation"/>
    <property type="evidence" value="ECO:0000318"/>
    <property type="project" value="GO_Central"/>
</dbReference>
<dbReference type="CDD" id="cd14869">
    <property type="entry name" value="uS7_Bacteria"/>
    <property type="match status" value="1"/>
</dbReference>
<dbReference type="FunFam" id="1.10.455.10:FF:000001">
    <property type="entry name" value="30S ribosomal protein S7"/>
    <property type="match status" value="1"/>
</dbReference>
<dbReference type="Gene3D" id="1.10.455.10">
    <property type="entry name" value="Ribosomal protein S7 domain"/>
    <property type="match status" value="1"/>
</dbReference>
<dbReference type="HAMAP" id="MF_00480_B">
    <property type="entry name" value="Ribosomal_uS7_B"/>
    <property type="match status" value="1"/>
</dbReference>
<dbReference type="InterPro" id="IPR000235">
    <property type="entry name" value="Ribosomal_uS7"/>
</dbReference>
<dbReference type="InterPro" id="IPR005717">
    <property type="entry name" value="Ribosomal_uS7_bac/org-type"/>
</dbReference>
<dbReference type="InterPro" id="IPR020606">
    <property type="entry name" value="Ribosomal_uS7_CS"/>
</dbReference>
<dbReference type="InterPro" id="IPR023798">
    <property type="entry name" value="Ribosomal_uS7_dom"/>
</dbReference>
<dbReference type="InterPro" id="IPR036823">
    <property type="entry name" value="Ribosomal_uS7_dom_sf"/>
</dbReference>
<dbReference type="NCBIfam" id="TIGR01029">
    <property type="entry name" value="rpsG_bact"/>
    <property type="match status" value="1"/>
</dbReference>
<dbReference type="PANTHER" id="PTHR11205">
    <property type="entry name" value="RIBOSOMAL PROTEIN S7"/>
    <property type="match status" value="1"/>
</dbReference>
<dbReference type="Pfam" id="PF00177">
    <property type="entry name" value="Ribosomal_S7"/>
    <property type="match status" value="1"/>
</dbReference>
<dbReference type="PIRSF" id="PIRSF002122">
    <property type="entry name" value="RPS7p_RPS7a_RPS5e_RPS7o"/>
    <property type="match status" value="1"/>
</dbReference>
<dbReference type="SUPFAM" id="SSF47973">
    <property type="entry name" value="Ribosomal protein S7"/>
    <property type="match status" value="1"/>
</dbReference>
<dbReference type="PROSITE" id="PS00052">
    <property type="entry name" value="RIBOSOMAL_S7"/>
    <property type="match status" value="1"/>
</dbReference>
<accession>P47334</accession>
<accession>Q49326</accession>
<name>RS7_MYCGE</name>
<proteinExistence type="inferred from homology"/>